<organism>
    <name type="scientific">Nostoc sp. (strain PCC 7120 / SAG 25.82 / UTEX 2576)</name>
    <dbReference type="NCBI Taxonomy" id="103690"/>
    <lineage>
        <taxon>Bacteria</taxon>
        <taxon>Bacillati</taxon>
        <taxon>Cyanobacteriota</taxon>
        <taxon>Cyanophyceae</taxon>
        <taxon>Nostocales</taxon>
        <taxon>Nostocaceae</taxon>
        <taxon>Nostoc</taxon>
    </lineage>
</organism>
<reference key="1">
    <citation type="journal article" date="2001" name="DNA Res.">
        <title>Complete genomic sequence of the filamentous nitrogen-fixing cyanobacterium Anabaena sp. strain PCC 7120.</title>
        <authorList>
            <person name="Kaneko T."/>
            <person name="Nakamura Y."/>
            <person name="Wolk C.P."/>
            <person name="Kuritz T."/>
            <person name="Sasamoto S."/>
            <person name="Watanabe A."/>
            <person name="Iriguchi M."/>
            <person name="Ishikawa A."/>
            <person name="Kawashima K."/>
            <person name="Kimura T."/>
            <person name="Kishida Y."/>
            <person name="Kohara M."/>
            <person name="Matsumoto M."/>
            <person name="Matsuno A."/>
            <person name="Muraki A."/>
            <person name="Nakazaki N."/>
            <person name="Shimpo S."/>
            <person name="Sugimoto M."/>
            <person name="Takazawa M."/>
            <person name="Yamada M."/>
            <person name="Yasuda M."/>
            <person name="Tabata S."/>
        </authorList>
    </citation>
    <scope>NUCLEOTIDE SEQUENCE [LARGE SCALE GENOMIC DNA]</scope>
    <source>
        <strain>PCC 7120 / SAG 25.82 / UTEX 2576</strain>
    </source>
</reference>
<dbReference type="EC" id="1.10.3.9" evidence="1"/>
<dbReference type="EMBL" id="BA000019">
    <property type="protein sequence ID" value="BAB75441.1"/>
    <property type="molecule type" value="Genomic_DNA"/>
</dbReference>
<dbReference type="PIR" id="AG2273">
    <property type="entry name" value="AG2273"/>
</dbReference>
<dbReference type="SMR" id="Q8YQS7"/>
<dbReference type="STRING" id="103690.gene:10495784"/>
<dbReference type="KEGG" id="ana:alr3742"/>
<dbReference type="eggNOG" id="ENOG502Z9YF">
    <property type="taxonomic scope" value="Bacteria"/>
</dbReference>
<dbReference type="OrthoDB" id="505356at2"/>
<dbReference type="Proteomes" id="UP000002483">
    <property type="component" value="Chromosome"/>
</dbReference>
<dbReference type="GO" id="GO:0009523">
    <property type="term" value="C:photosystem II"/>
    <property type="evidence" value="ECO:0007669"/>
    <property type="project" value="UniProtKB-KW"/>
</dbReference>
<dbReference type="GO" id="GO:0031676">
    <property type="term" value="C:plasma membrane-derived thylakoid membrane"/>
    <property type="evidence" value="ECO:0007669"/>
    <property type="project" value="UniProtKB-SubCell"/>
</dbReference>
<dbReference type="GO" id="GO:0016168">
    <property type="term" value="F:chlorophyll binding"/>
    <property type="evidence" value="ECO:0007669"/>
    <property type="project" value="UniProtKB-UniRule"/>
</dbReference>
<dbReference type="GO" id="GO:0045156">
    <property type="term" value="F:electron transporter, transferring electrons within the cyclic electron transport pathway of photosynthesis activity"/>
    <property type="evidence" value="ECO:0007669"/>
    <property type="project" value="InterPro"/>
</dbReference>
<dbReference type="GO" id="GO:0005506">
    <property type="term" value="F:iron ion binding"/>
    <property type="evidence" value="ECO:0007669"/>
    <property type="project" value="UniProtKB-UniRule"/>
</dbReference>
<dbReference type="GO" id="GO:0016682">
    <property type="term" value="F:oxidoreductase activity, acting on diphenols and related substances as donors, oxygen as acceptor"/>
    <property type="evidence" value="ECO:0007669"/>
    <property type="project" value="UniProtKB-UniRule"/>
</dbReference>
<dbReference type="GO" id="GO:0010242">
    <property type="term" value="F:oxygen evolving activity"/>
    <property type="evidence" value="ECO:0007669"/>
    <property type="project" value="UniProtKB-EC"/>
</dbReference>
<dbReference type="GO" id="GO:0009772">
    <property type="term" value="P:photosynthetic electron transport in photosystem II"/>
    <property type="evidence" value="ECO:0007669"/>
    <property type="project" value="InterPro"/>
</dbReference>
<dbReference type="GO" id="GO:0009635">
    <property type="term" value="P:response to herbicide"/>
    <property type="evidence" value="ECO:0007669"/>
    <property type="project" value="UniProtKB-KW"/>
</dbReference>
<dbReference type="FunFam" id="1.20.85.10:FF:000002">
    <property type="entry name" value="Photosystem II protein D1"/>
    <property type="match status" value="1"/>
</dbReference>
<dbReference type="Gene3D" id="1.20.85.10">
    <property type="entry name" value="Photosystem II protein D1-like"/>
    <property type="match status" value="2"/>
</dbReference>
<dbReference type="HAMAP" id="MF_01379">
    <property type="entry name" value="PSII_PsbA_D1"/>
    <property type="match status" value="1"/>
</dbReference>
<dbReference type="InterPro" id="IPR055266">
    <property type="entry name" value="D1/D2"/>
</dbReference>
<dbReference type="InterPro" id="IPR036854">
    <property type="entry name" value="Photo_II_D1/D2_sf"/>
</dbReference>
<dbReference type="InterPro" id="IPR000484">
    <property type="entry name" value="Photo_RC_L/M"/>
</dbReference>
<dbReference type="InterPro" id="IPR055265">
    <property type="entry name" value="Photo_RC_L/M_CS"/>
</dbReference>
<dbReference type="InterPro" id="IPR005867">
    <property type="entry name" value="PSII_D1"/>
</dbReference>
<dbReference type="NCBIfam" id="TIGR01151">
    <property type="entry name" value="psbA"/>
    <property type="match status" value="1"/>
</dbReference>
<dbReference type="PANTHER" id="PTHR33149:SF12">
    <property type="entry name" value="PHOTOSYSTEM II D2 PROTEIN"/>
    <property type="match status" value="1"/>
</dbReference>
<dbReference type="PANTHER" id="PTHR33149">
    <property type="entry name" value="PHOTOSYSTEM II PROTEIN D1"/>
    <property type="match status" value="1"/>
</dbReference>
<dbReference type="Pfam" id="PF00124">
    <property type="entry name" value="Photo_RC"/>
    <property type="match status" value="1"/>
</dbReference>
<dbReference type="PRINTS" id="PR00256">
    <property type="entry name" value="REACTNCENTRE"/>
</dbReference>
<dbReference type="SUPFAM" id="SSF81483">
    <property type="entry name" value="Bacterial photosystem II reaction centre, L and M subunits"/>
    <property type="match status" value="1"/>
</dbReference>
<dbReference type="PROSITE" id="PS00244">
    <property type="entry name" value="REACTION_CENTER"/>
    <property type="match status" value="1"/>
</dbReference>
<protein>
    <recommendedName>
        <fullName evidence="1">Photosystem II protein D1 3</fullName>
        <shortName evidence="1">PSII D1 protein 3</shortName>
        <ecNumber evidence="1">1.10.3.9</ecNumber>
    </recommendedName>
    <alternativeName>
        <fullName evidence="1">Photosystem II Q(B) protein 3</fullName>
    </alternativeName>
</protein>
<comment type="function">
    <text evidence="1">Photosystem II (PSII) is a light-driven water:plastoquinone oxidoreductase that uses light energy to abstract electrons from H(2)O, generating O(2) and a proton gradient subsequently used for ATP formation. It consists of a core antenna complex that captures photons, and an electron transfer chain that converts photonic excitation into a charge separation. The D1/D2 (PsbA/PsbD) reaction center heterodimer binds P680, the primary electron donor of PSII as well as several subsequent electron acceptors.</text>
</comment>
<comment type="catalytic activity">
    <reaction evidence="1">
        <text>2 a plastoquinone + 4 hnu + 2 H2O = 2 a plastoquinol + O2</text>
        <dbReference type="Rhea" id="RHEA:36359"/>
        <dbReference type="Rhea" id="RHEA-COMP:9561"/>
        <dbReference type="Rhea" id="RHEA-COMP:9562"/>
        <dbReference type="ChEBI" id="CHEBI:15377"/>
        <dbReference type="ChEBI" id="CHEBI:15379"/>
        <dbReference type="ChEBI" id="CHEBI:17757"/>
        <dbReference type="ChEBI" id="CHEBI:30212"/>
        <dbReference type="ChEBI" id="CHEBI:62192"/>
        <dbReference type="EC" id="1.10.3.9"/>
    </reaction>
</comment>
<comment type="cofactor">
    <text evidence="1">The D1/D2 heterodimer binds P680, chlorophylls that are the primary electron donor of PSII, and subsequent electron acceptors. It shares a non-heme iron and each subunit binds pheophytin, quinone, additional chlorophylls, carotenoids and lipids. D1 provides most of the ligands for the Mn4-Ca-O5 cluster of the oxygen-evolving complex (OEC). There is also a Cl(-1) ion associated with D1 and D2, which is required for oxygen evolution. The PSII complex binds additional chlorophylls, carotenoids and specific lipids.</text>
</comment>
<comment type="subunit">
    <text evidence="1">PSII is composed of 1 copy each of membrane proteins PsbA, PsbB, PsbC, PsbD, PsbE, PsbF, PsbH, PsbI, PsbJ, PsbK, PsbL, PsbM, PsbT, PsbX, PsbY, PsbZ, Psb30/Ycf12, peripheral proteins PsbO, CyanoQ (PsbQ), PsbU, PsbV and a large number of cofactors. It forms dimeric complexes.</text>
</comment>
<comment type="subcellular location">
    <subcellularLocation>
        <location evidence="1">Cellular thylakoid membrane</location>
        <topology evidence="1">Multi-pass membrane protein</topology>
    </subcellularLocation>
</comment>
<comment type="PTM">
    <text evidence="1">Tyr-161 forms a radical intermediate that is referred to as redox-active TyrZ, YZ or Y-Z.</text>
</comment>
<comment type="PTM">
    <text evidence="1">C-terminally processed by CtpA; processing is essential to allow assembly of the oxygen-evolving complex and thus photosynthetic growth.</text>
</comment>
<comment type="miscellaneous">
    <text evidence="1">Cyanobacteria usually contain more than 2 copies of the psbA gene.</text>
</comment>
<comment type="miscellaneous">
    <text evidence="1">2 of the reaction center chlorophylls (ChlD1 and ChlD2) are entirely coordinated by water.</text>
</comment>
<comment type="miscellaneous">
    <text evidence="1">Herbicides such as atrazine, BNT, diuron or ioxynil bind in the Q(B) binding site and block subsequent electron transfer.</text>
</comment>
<comment type="similarity">
    <text evidence="1">Belongs to the reaction center PufL/M/PsbA/D family.</text>
</comment>
<name>PSBA3_NOSS1</name>
<keyword id="KW-0106">Calcium</keyword>
<keyword id="KW-0148">Chlorophyll</keyword>
<keyword id="KW-0157">Chromophore</keyword>
<keyword id="KW-0249">Electron transport</keyword>
<keyword id="KW-0359">Herbicide resistance</keyword>
<keyword id="KW-0408">Iron</keyword>
<keyword id="KW-0460">Magnesium</keyword>
<keyword id="KW-0464">Manganese</keyword>
<keyword id="KW-0472">Membrane</keyword>
<keyword id="KW-0479">Metal-binding</keyword>
<keyword id="KW-0560">Oxidoreductase</keyword>
<keyword id="KW-0602">Photosynthesis</keyword>
<keyword id="KW-0604">Photosystem II</keyword>
<keyword id="KW-1185">Reference proteome</keyword>
<keyword id="KW-0793">Thylakoid</keyword>
<keyword id="KW-0812">Transmembrane</keyword>
<keyword id="KW-1133">Transmembrane helix</keyword>
<keyword id="KW-0813">Transport</keyword>
<accession>Q8YQS7</accession>
<sequence>MTTLLEQRSSANLWHRFGNWITSTENRMYVGWFGVLLIPTALTAAIVFILAFIAAPPVDVDGIREPVSGSLLYGNNIITATVVPTSAAIGLHLYPIWEAASLDEWLYNGGPYQMIVLHFLIAIYAYMGRQWELSYRLGMRPWIPVAFSAPVAAATAVLLIYPIGQGSFSDGMMLGISGTFNFMIVFSPEHNILMHPFHMIGVAGVFGGALFSAMHGSLVTSTLVRETSEVESANTGYKFGQEEETYNIVAAHGYFGRLIFQYASFNNSRSLHFFLAAWPVIGIWFAALGISTMSFNLNGFNFNNSILDHQGRTIDTWADLLNRANLGIEVMHERNAHNFPLDLASGEVQPIALTAPAIAS</sequence>
<proteinExistence type="inferred from homology"/>
<gene>
    <name evidence="1 2" type="primary">psbA5</name>
    <name type="synonym">psbA-5</name>
    <name type="ordered locus">alr3742</name>
</gene>
<evidence type="ECO:0000255" key="1">
    <source>
        <dbReference type="HAMAP-Rule" id="MF_01379"/>
    </source>
</evidence>
<evidence type="ECO:0000305" key="2"/>
<feature type="chain" id="PRO_0000339922" description="Photosystem II protein D1 3">
    <location>
        <begin position="1"/>
        <end position="344"/>
    </location>
</feature>
<feature type="propeptide" id="PRO_0000339923" evidence="1">
    <location>
        <begin position="345"/>
        <end position="360"/>
    </location>
</feature>
<feature type="transmembrane region" description="Helical" evidence="1">
    <location>
        <begin position="29"/>
        <end position="46"/>
    </location>
</feature>
<feature type="transmembrane region" description="Helical" evidence="1">
    <location>
        <begin position="118"/>
        <end position="133"/>
    </location>
</feature>
<feature type="transmembrane region" description="Helical" evidence="1">
    <location>
        <begin position="142"/>
        <end position="156"/>
    </location>
</feature>
<feature type="transmembrane region" description="Helical" evidence="1">
    <location>
        <begin position="197"/>
        <end position="218"/>
    </location>
</feature>
<feature type="transmembrane region" description="Helical" evidence="1">
    <location>
        <begin position="274"/>
        <end position="288"/>
    </location>
</feature>
<feature type="binding site" description="axial binding residue" evidence="1">
    <location>
        <position position="118"/>
    </location>
    <ligand>
        <name>chlorophyll a</name>
        <dbReference type="ChEBI" id="CHEBI:58416"/>
        <label>ChlzD1</label>
    </ligand>
    <ligandPart>
        <name>Mg</name>
        <dbReference type="ChEBI" id="CHEBI:25107"/>
    </ligandPart>
</feature>
<feature type="binding site" evidence="1">
    <location>
        <position position="126"/>
    </location>
    <ligand>
        <name>pheophytin a</name>
        <dbReference type="ChEBI" id="CHEBI:136840"/>
        <label>D1</label>
    </ligand>
</feature>
<feature type="binding site" evidence="1">
    <location>
        <position position="170"/>
    </location>
    <ligand>
        <name>[CaMn4O5] cluster</name>
        <dbReference type="ChEBI" id="CHEBI:189552"/>
    </ligand>
</feature>
<feature type="binding site" evidence="1">
    <location>
        <position position="189"/>
    </location>
    <ligand>
        <name>[CaMn4O5] cluster</name>
        <dbReference type="ChEBI" id="CHEBI:189552"/>
    </ligand>
</feature>
<feature type="binding site" description="axial binding residue" evidence="1">
    <location>
        <position position="198"/>
    </location>
    <ligand>
        <name>chlorophyll a</name>
        <dbReference type="ChEBI" id="CHEBI:58416"/>
        <label>PD1</label>
    </ligand>
    <ligandPart>
        <name>Mg</name>
        <dbReference type="ChEBI" id="CHEBI:25107"/>
    </ligandPart>
</feature>
<feature type="binding site" evidence="1">
    <location>
        <position position="215"/>
    </location>
    <ligand>
        <name>a quinone</name>
        <dbReference type="ChEBI" id="CHEBI:132124"/>
        <label>B</label>
    </ligand>
</feature>
<feature type="binding site" evidence="1">
    <location>
        <position position="215"/>
    </location>
    <ligand>
        <name>Fe cation</name>
        <dbReference type="ChEBI" id="CHEBI:24875"/>
        <note>ligand shared with heterodimeric partner</note>
    </ligand>
</feature>
<feature type="binding site" evidence="1">
    <location>
        <begin position="264"/>
        <end position="265"/>
    </location>
    <ligand>
        <name>a quinone</name>
        <dbReference type="ChEBI" id="CHEBI:132124"/>
        <label>B</label>
    </ligand>
</feature>
<feature type="binding site" evidence="1">
    <location>
        <position position="272"/>
    </location>
    <ligand>
        <name>Fe cation</name>
        <dbReference type="ChEBI" id="CHEBI:24875"/>
        <note>ligand shared with heterodimeric partner</note>
    </ligand>
</feature>
<feature type="binding site" evidence="1">
    <location>
        <position position="332"/>
    </location>
    <ligand>
        <name>[CaMn4O5] cluster</name>
        <dbReference type="ChEBI" id="CHEBI:189552"/>
    </ligand>
</feature>
<feature type="binding site" evidence="1">
    <location>
        <position position="333"/>
    </location>
    <ligand>
        <name>[CaMn4O5] cluster</name>
        <dbReference type="ChEBI" id="CHEBI:189552"/>
    </ligand>
</feature>
<feature type="binding site" evidence="1">
    <location>
        <position position="342"/>
    </location>
    <ligand>
        <name>[CaMn4O5] cluster</name>
        <dbReference type="ChEBI" id="CHEBI:189552"/>
    </ligand>
</feature>
<feature type="binding site" evidence="1">
    <location>
        <position position="344"/>
    </location>
    <ligand>
        <name>[CaMn4O5] cluster</name>
        <dbReference type="ChEBI" id="CHEBI:189552"/>
    </ligand>
</feature>
<feature type="site" description="Tyrosine radical intermediate" evidence="1">
    <location>
        <position position="161"/>
    </location>
</feature>
<feature type="site" description="Stabilizes free radical intermediate" evidence="1">
    <location>
        <position position="190"/>
    </location>
</feature>
<feature type="site" description="Cleavage; by CtpA" evidence="1">
    <location>
        <begin position="344"/>
        <end position="345"/>
    </location>
</feature>